<protein>
    <recommendedName>
        <fullName evidence="1">Bifunctional polymyxin resistance protein ArnA</fullName>
    </recommendedName>
    <domain>
        <recommendedName>
            <fullName evidence="1">UDP-4-amino-4-deoxy-L-arabinose formyltransferase</fullName>
            <ecNumber evidence="1">2.1.2.13</ecNumber>
        </recommendedName>
        <alternativeName>
            <fullName evidence="1">ArnAFT</fullName>
        </alternativeName>
        <alternativeName>
            <fullName evidence="1">UDP-L-Ara4N formyltransferase</fullName>
        </alternativeName>
    </domain>
    <domain>
        <recommendedName>
            <fullName evidence="1">UDP-glucuronic acid oxidase, UDP-4-keto-hexauronic acid decarboxylating</fullName>
            <ecNumber evidence="1">1.1.1.305</ecNumber>
        </recommendedName>
        <alternativeName>
            <fullName evidence="1">ArnADH</fullName>
        </alternativeName>
        <alternativeName>
            <fullName evidence="1">UDP-GlcUA decarboxylase</fullName>
        </alternativeName>
        <alternativeName>
            <fullName evidence="1">UDP-glucuronic acid dehydrogenase</fullName>
        </alternativeName>
    </domain>
</protein>
<name>ARNA_ECOBW</name>
<comment type="function">
    <text evidence="1">Bifunctional enzyme that catalyzes the oxidative decarboxylation of UDP-glucuronic acid (UDP-GlcUA) to UDP-4-keto-arabinose (UDP-Ara4O) and the addition of a formyl group to UDP-4-amino-4-deoxy-L-arabinose (UDP-L-Ara4N) to form UDP-L-4-formamido-arabinose (UDP-L-Ara4FN). The modified arabinose is attached to lipid A and is required for resistance to polymyxin and cationic antimicrobial peptides.</text>
</comment>
<comment type="catalytic activity">
    <reaction evidence="1">
        <text>UDP-alpha-D-glucuronate + NAD(+) = UDP-beta-L-threo-pentopyranos-4-ulose + CO2 + NADH</text>
        <dbReference type="Rhea" id="RHEA:24702"/>
        <dbReference type="ChEBI" id="CHEBI:16526"/>
        <dbReference type="ChEBI" id="CHEBI:57540"/>
        <dbReference type="ChEBI" id="CHEBI:57945"/>
        <dbReference type="ChEBI" id="CHEBI:58052"/>
        <dbReference type="ChEBI" id="CHEBI:58710"/>
        <dbReference type="EC" id="1.1.1.305"/>
    </reaction>
</comment>
<comment type="catalytic activity">
    <reaction evidence="1">
        <text>UDP-4-amino-4-deoxy-beta-L-arabinose + (6R)-10-formyltetrahydrofolate = UDP-4-deoxy-4-formamido-beta-L-arabinose + (6S)-5,6,7,8-tetrahydrofolate + H(+)</text>
        <dbReference type="Rhea" id="RHEA:24706"/>
        <dbReference type="ChEBI" id="CHEBI:15378"/>
        <dbReference type="ChEBI" id="CHEBI:57453"/>
        <dbReference type="ChEBI" id="CHEBI:58708"/>
        <dbReference type="ChEBI" id="CHEBI:58709"/>
        <dbReference type="ChEBI" id="CHEBI:195366"/>
        <dbReference type="EC" id="2.1.2.13"/>
    </reaction>
</comment>
<comment type="pathway">
    <text evidence="1">Nucleotide-sugar biosynthesis; UDP-4-deoxy-4-formamido-beta-L-arabinose biosynthesis; UDP-4-deoxy-4-formamido-beta-L-arabinose from UDP-alpha-D-glucuronate: step 1/3.</text>
</comment>
<comment type="pathway">
    <text evidence="1">Nucleotide-sugar biosynthesis; UDP-4-deoxy-4-formamido-beta-L-arabinose biosynthesis; UDP-4-deoxy-4-formamido-beta-L-arabinose from UDP-alpha-D-glucuronate: step 3/3.</text>
</comment>
<comment type="pathway">
    <text evidence="1">Bacterial outer membrane biogenesis; lipopolysaccharide biosynthesis.</text>
</comment>
<comment type="subunit">
    <text evidence="1">Homohexamer, formed by a dimer of trimers.</text>
</comment>
<comment type="similarity">
    <text evidence="1">In the N-terminal section; belongs to the Fmt family. UDP-L-Ara4N formyltransferase subfamily.</text>
</comment>
<comment type="similarity">
    <text evidence="1">In the C-terminal section; belongs to the NAD(P)-dependent epimerase/dehydratase family. UDP-glucuronic acid decarboxylase subfamily.</text>
</comment>
<feature type="chain" id="PRO_1000213729" description="Bifunctional polymyxin resistance protein ArnA">
    <location>
        <begin position="1"/>
        <end position="660"/>
    </location>
</feature>
<feature type="region of interest" description="Formyltransferase ArnAFT">
    <location>
        <begin position="1"/>
        <end position="304"/>
    </location>
</feature>
<feature type="region of interest" description="Dehydrogenase ArnADH">
    <location>
        <begin position="314"/>
        <end position="660"/>
    </location>
</feature>
<feature type="active site" description="Proton donor; for formyltransferase activity" evidence="1">
    <location>
        <position position="104"/>
    </location>
</feature>
<feature type="active site" description="Proton acceptor; for decarboxylase activity" evidence="1">
    <location>
        <position position="434"/>
    </location>
</feature>
<feature type="active site" description="Proton donor; for decarboxylase activity" evidence="1">
    <location>
        <position position="619"/>
    </location>
</feature>
<feature type="binding site" evidence="1">
    <location>
        <begin position="86"/>
        <end position="88"/>
    </location>
    <ligand>
        <name>(6R)-10-formyltetrahydrofolate</name>
        <dbReference type="ChEBI" id="CHEBI:195366"/>
    </ligand>
</feature>
<feature type="binding site" evidence="1">
    <location>
        <position position="114"/>
    </location>
    <ligand>
        <name>(6R)-10-formyltetrahydrofolate</name>
        <dbReference type="ChEBI" id="CHEBI:195366"/>
    </ligand>
</feature>
<feature type="binding site" evidence="1">
    <location>
        <begin position="136"/>
        <end position="140"/>
    </location>
    <ligand>
        <name>(6R)-10-formyltetrahydrofolate</name>
        <dbReference type="ChEBI" id="CHEBI:195366"/>
    </ligand>
</feature>
<feature type="binding site" evidence="1">
    <location>
        <position position="347"/>
    </location>
    <ligand>
        <name>NAD(+)</name>
        <dbReference type="ChEBI" id="CHEBI:57540"/>
    </ligand>
</feature>
<feature type="binding site" evidence="1">
    <location>
        <begin position="368"/>
        <end position="369"/>
    </location>
    <ligand>
        <name>NAD(+)</name>
        <dbReference type="ChEBI" id="CHEBI:57540"/>
    </ligand>
</feature>
<feature type="binding site" evidence="1">
    <location>
        <position position="393"/>
    </location>
    <ligand>
        <name>UDP-alpha-D-glucuronate</name>
        <dbReference type="ChEBI" id="CHEBI:58052"/>
    </ligand>
</feature>
<feature type="binding site" evidence="1">
    <location>
        <position position="398"/>
    </location>
    <ligand>
        <name>UDP-alpha-D-glucuronate</name>
        <dbReference type="ChEBI" id="CHEBI:58052"/>
    </ligand>
</feature>
<feature type="binding site" evidence="1">
    <location>
        <begin position="432"/>
        <end position="433"/>
    </location>
    <ligand>
        <name>UDP-alpha-D-glucuronate</name>
        <dbReference type="ChEBI" id="CHEBI:58052"/>
    </ligand>
</feature>
<feature type="binding site" evidence="1">
    <location>
        <position position="460"/>
    </location>
    <ligand>
        <name>UDP-alpha-D-glucuronate</name>
        <dbReference type="ChEBI" id="CHEBI:58052"/>
    </ligand>
</feature>
<feature type="binding site" evidence="1">
    <location>
        <position position="492"/>
    </location>
    <ligand>
        <name>UDP-alpha-D-glucuronate</name>
        <dbReference type="ChEBI" id="CHEBI:58052"/>
    </ligand>
</feature>
<feature type="binding site" evidence="1">
    <location>
        <begin position="526"/>
        <end position="535"/>
    </location>
    <ligand>
        <name>UDP-alpha-D-glucuronate</name>
        <dbReference type="ChEBI" id="CHEBI:58052"/>
    </ligand>
</feature>
<feature type="binding site" evidence="1">
    <location>
        <position position="613"/>
    </location>
    <ligand>
        <name>UDP-alpha-D-glucuronate</name>
        <dbReference type="ChEBI" id="CHEBI:58052"/>
    </ligand>
</feature>
<feature type="site" description="Transition state stabilizer" evidence="1">
    <location>
        <position position="102"/>
    </location>
</feature>
<feature type="site" description="Raises pKa of active site His" evidence="1">
    <location>
        <position position="140"/>
    </location>
</feature>
<keyword id="KW-0046">Antibiotic resistance</keyword>
<keyword id="KW-0441">Lipid A biosynthesis</keyword>
<keyword id="KW-0444">Lipid biosynthesis</keyword>
<keyword id="KW-0443">Lipid metabolism</keyword>
<keyword id="KW-0448">Lipopolysaccharide biosynthesis</keyword>
<keyword id="KW-0511">Multifunctional enzyme</keyword>
<keyword id="KW-0520">NAD</keyword>
<keyword id="KW-0560">Oxidoreductase</keyword>
<keyword id="KW-0808">Transferase</keyword>
<accession>C4ZU97</accession>
<organism>
    <name type="scientific">Escherichia coli (strain K12 / MC4100 / BW2952)</name>
    <dbReference type="NCBI Taxonomy" id="595496"/>
    <lineage>
        <taxon>Bacteria</taxon>
        <taxon>Pseudomonadati</taxon>
        <taxon>Pseudomonadota</taxon>
        <taxon>Gammaproteobacteria</taxon>
        <taxon>Enterobacterales</taxon>
        <taxon>Enterobacteriaceae</taxon>
        <taxon>Escherichia</taxon>
    </lineage>
</organism>
<dbReference type="EC" id="2.1.2.13" evidence="1"/>
<dbReference type="EC" id="1.1.1.305" evidence="1"/>
<dbReference type="EMBL" id="CP001396">
    <property type="protein sequence ID" value="ACR63260.1"/>
    <property type="molecule type" value="Genomic_DNA"/>
</dbReference>
<dbReference type="RefSeq" id="WP_000860273.1">
    <property type="nucleotide sequence ID" value="NC_012759.1"/>
</dbReference>
<dbReference type="SMR" id="C4ZU97"/>
<dbReference type="KEGG" id="ebw:BWG_2028"/>
<dbReference type="HOGENOM" id="CLU_007383_23_1_6"/>
<dbReference type="UniPathway" id="UPA00030"/>
<dbReference type="UniPathway" id="UPA00032">
    <property type="reaction ID" value="UER00492"/>
</dbReference>
<dbReference type="UniPathway" id="UPA00032">
    <property type="reaction ID" value="UER00494"/>
</dbReference>
<dbReference type="GO" id="GO:0016020">
    <property type="term" value="C:membrane"/>
    <property type="evidence" value="ECO:0007669"/>
    <property type="project" value="GOC"/>
</dbReference>
<dbReference type="GO" id="GO:0016831">
    <property type="term" value="F:carboxy-lyase activity"/>
    <property type="evidence" value="ECO:0007669"/>
    <property type="project" value="InterPro"/>
</dbReference>
<dbReference type="GO" id="GO:0099619">
    <property type="term" value="F:UDP-4-amino-4-deoxy-L-arabinose formyltransferase activity"/>
    <property type="evidence" value="ECO:0007669"/>
    <property type="project" value="UniProtKB-EC"/>
</dbReference>
<dbReference type="GO" id="GO:0099618">
    <property type="term" value="F:UDP-glucuronate dehydrogenase activity"/>
    <property type="evidence" value="ECO:0007669"/>
    <property type="project" value="UniProtKB-EC"/>
</dbReference>
<dbReference type="GO" id="GO:0009245">
    <property type="term" value="P:lipid A biosynthetic process"/>
    <property type="evidence" value="ECO:0007669"/>
    <property type="project" value="UniProtKB-KW"/>
</dbReference>
<dbReference type="GO" id="GO:0009103">
    <property type="term" value="P:lipopolysaccharide biosynthetic process"/>
    <property type="evidence" value="ECO:0007669"/>
    <property type="project" value="UniProtKB-UniRule"/>
</dbReference>
<dbReference type="GO" id="GO:0046677">
    <property type="term" value="P:response to antibiotic"/>
    <property type="evidence" value="ECO:0007669"/>
    <property type="project" value="UniProtKB-KW"/>
</dbReference>
<dbReference type="CDD" id="cd08702">
    <property type="entry name" value="Arna_FMT_C"/>
    <property type="match status" value="1"/>
</dbReference>
<dbReference type="CDD" id="cd05257">
    <property type="entry name" value="Arna_like_SDR_e"/>
    <property type="match status" value="1"/>
</dbReference>
<dbReference type="CDD" id="cd08644">
    <property type="entry name" value="FMT_core_ArnA_N"/>
    <property type="match status" value="1"/>
</dbReference>
<dbReference type="FunFam" id="3.40.50.12230:FF:000002">
    <property type="entry name" value="Bifunctional polymyxin resistance protein ArnA"/>
    <property type="match status" value="1"/>
</dbReference>
<dbReference type="FunFam" id="3.40.50.720:FF:000197">
    <property type="entry name" value="Bifunctional polymyxin resistance protein ArnA"/>
    <property type="match status" value="1"/>
</dbReference>
<dbReference type="Gene3D" id="3.40.50.12230">
    <property type="match status" value="1"/>
</dbReference>
<dbReference type="Gene3D" id="3.40.50.720">
    <property type="entry name" value="NAD(P)-binding Rossmann-like Domain"/>
    <property type="match status" value="1"/>
</dbReference>
<dbReference type="HAMAP" id="MF_01166">
    <property type="entry name" value="ArnA"/>
    <property type="match status" value="1"/>
</dbReference>
<dbReference type="InterPro" id="IPR045869">
    <property type="entry name" value="Arna-like_SDR_e"/>
</dbReference>
<dbReference type="InterPro" id="IPR021168">
    <property type="entry name" value="Bifun_polymyxin_resist_ArnA"/>
</dbReference>
<dbReference type="InterPro" id="IPR001509">
    <property type="entry name" value="Epimerase_deHydtase"/>
</dbReference>
<dbReference type="InterPro" id="IPR005793">
    <property type="entry name" value="Formyl_trans_C"/>
</dbReference>
<dbReference type="InterPro" id="IPR002376">
    <property type="entry name" value="Formyl_transf_N"/>
</dbReference>
<dbReference type="InterPro" id="IPR036477">
    <property type="entry name" value="Formyl_transf_N_sf"/>
</dbReference>
<dbReference type="InterPro" id="IPR011034">
    <property type="entry name" value="Formyl_transferase-like_C_sf"/>
</dbReference>
<dbReference type="InterPro" id="IPR050177">
    <property type="entry name" value="Lipid_A_modif_metabolic_enz"/>
</dbReference>
<dbReference type="InterPro" id="IPR036291">
    <property type="entry name" value="NAD(P)-bd_dom_sf"/>
</dbReference>
<dbReference type="NCBIfam" id="NF005414">
    <property type="entry name" value="PRK06988.1"/>
    <property type="match status" value="1"/>
</dbReference>
<dbReference type="NCBIfam" id="NF005998">
    <property type="entry name" value="PRK08125.1"/>
    <property type="match status" value="1"/>
</dbReference>
<dbReference type="NCBIfam" id="NF008872">
    <property type="entry name" value="PRK11908.1"/>
    <property type="match status" value="1"/>
</dbReference>
<dbReference type="PANTHER" id="PTHR43245">
    <property type="entry name" value="BIFUNCTIONAL POLYMYXIN RESISTANCE PROTEIN ARNA"/>
    <property type="match status" value="1"/>
</dbReference>
<dbReference type="PANTHER" id="PTHR43245:SF13">
    <property type="entry name" value="UDP-D-APIOSE_UDP-D-XYLOSE SYNTHASE 2"/>
    <property type="match status" value="1"/>
</dbReference>
<dbReference type="Pfam" id="PF01370">
    <property type="entry name" value="Epimerase"/>
    <property type="match status" value="1"/>
</dbReference>
<dbReference type="Pfam" id="PF02911">
    <property type="entry name" value="Formyl_trans_C"/>
    <property type="match status" value="1"/>
</dbReference>
<dbReference type="Pfam" id="PF00551">
    <property type="entry name" value="Formyl_trans_N"/>
    <property type="match status" value="1"/>
</dbReference>
<dbReference type="PIRSF" id="PIRSF036506">
    <property type="entry name" value="Bifun_polymyxin_resist_ArnA"/>
    <property type="match status" value="1"/>
</dbReference>
<dbReference type="SUPFAM" id="SSF50486">
    <property type="entry name" value="FMT C-terminal domain-like"/>
    <property type="match status" value="1"/>
</dbReference>
<dbReference type="SUPFAM" id="SSF53328">
    <property type="entry name" value="Formyltransferase"/>
    <property type="match status" value="1"/>
</dbReference>
<dbReference type="SUPFAM" id="SSF51735">
    <property type="entry name" value="NAD(P)-binding Rossmann-fold domains"/>
    <property type="match status" value="1"/>
</dbReference>
<proteinExistence type="inferred from homology"/>
<gene>
    <name evidence="1" type="primary">arnA</name>
    <name type="ordered locus">BWG_2028</name>
</gene>
<sequence length="660" mass="74289">MKTVVFAYHDMGCLGIEALLAAGYEISAIFTHTDNPGEKAFYGSVARLAAERGIPVYAPDNVNHPLWVERIAQLSPDVIFSFYYRHLIYDEILQLAPAGAFNLHGSLLPKYRGRAPLNWVLVNGETETGVTLHRMVKRADAGAIVAQLRIAIAPDDIAITLHHKLCHAARQLLEQTLPAIKHGNILEIAQRENEATCFGRRTPDDSFLEWHKPASVLHNMVRAVADPWPGAFSYVGNQKFTVWSSRVHPHASKAQPGSVISVAPLLIACGDGALEIVTGQAGDGITMQGSQLAQTLGLVQGSRLNSQPACTARRRTRVLILGVNGFIGNHLTERLLREDHYEVYGLDIGSDAISRFLNHPHFHFVEGDISIHSEWIEYHVKKCDVVLPLVAIATPIEYTRNPLRVFELDFEENLRIIRYCVKYRKRIIFPSTSEVYGMCSDKYFDEDHSNLIVGPVNKPRWIYSVSKQLLDRVIWAYGEKEGLQFTLFRPFNWMGPRLDNLNAARIGSSRAITQLILNLVEGSPIKLIDGGKQKRCFTDIRDGIEALYRIIENAGNRCDGEIINIGNPENEASIEELGEMLLASFEKHPLRHHFPPFAGFRVVESSSYYGKGYQDVEHRKPSIRNAHRCLDWEPKIDMQETIDETLDFFLRTVDLTDKPS</sequence>
<reference key="1">
    <citation type="journal article" date="2009" name="J. Bacteriol.">
        <title>Genomic sequencing reveals regulatory mutations and recombinational events in the widely used MC4100 lineage of Escherichia coli K-12.</title>
        <authorList>
            <person name="Ferenci T."/>
            <person name="Zhou Z."/>
            <person name="Betteridge T."/>
            <person name="Ren Y."/>
            <person name="Liu Y."/>
            <person name="Feng L."/>
            <person name="Reeves P.R."/>
            <person name="Wang L."/>
        </authorList>
    </citation>
    <scope>NUCLEOTIDE SEQUENCE [LARGE SCALE GENOMIC DNA]</scope>
    <source>
        <strain>K12 / MC4100 / BW2952</strain>
    </source>
</reference>
<evidence type="ECO:0000255" key="1">
    <source>
        <dbReference type="HAMAP-Rule" id="MF_01166"/>
    </source>
</evidence>